<name>DPOL_BPT5</name>
<feature type="chain" id="PRO_0000101267" description="DNA polymerase">
    <location>
        <begin position="1"/>
        <end position="855"/>
    </location>
</feature>
<feature type="domain" description="3'-5' exonuclease" evidence="1">
    <location>
        <begin position="107"/>
        <end position="332"/>
    </location>
</feature>
<feature type="region of interest" description="Polymerase" evidence="3">
    <location>
        <begin position="333"/>
        <end position="833"/>
    </location>
</feature>
<gene>
    <name evidence="7" type="ORF">T5.122</name>
    <name evidence="8" type="ORF">T5p120</name>
</gene>
<evidence type="ECO:0000255" key="1"/>
<evidence type="ECO:0000255" key="2">
    <source>
        <dbReference type="RuleBase" id="RU004460"/>
    </source>
</evidence>
<evidence type="ECO:0000269" key="3">
    <source>
    </source>
</evidence>
<evidence type="ECO:0000269" key="4">
    <source>
    </source>
</evidence>
<evidence type="ECO:0000305" key="5"/>
<evidence type="ECO:0000305" key="6">
    <source>
    </source>
</evidence>
<evidence type="ECO:0000312" key="7">
    <source>
        <dbReference type="EMBL" id="AAS77168.1"/>
    </source>
</evidence>
<evidence type="ECO:0000312" key="8">
    <source>
        <dbReference type="EMBL" id="AAU05259.1"/>
    </source>
</evidence>
<organism>
    <name type="scientific">Escherichia phage T5</name>
    <name type="common">Enterobacteria phage T5</name>
    <dbReference type="NCBI Taxonomy" id="2695836"/>
    <lineage>
        <taxon>Viruses</taxon>
        <taxon>Duplodnaviria</taxon>
        <taxon>Heunggongvirae</taxon>
        <taxon>Uroviricota</taxon>
        <taxon>Caudoviricetes</taxon>
        <taxon>Demerecviridae</taxon>
        <taxon>Markadamsvirinae</taxon>
        <taxon>Tequintavirus</taxon>
        <taxon>Tequintavirus T5</taxon>
    </lineage>
</organism>
<organismHost>
    <name type="scientific">Escherichia coli</name>
    <dbReference type="NCBI Taxonomy" id="562"/>
</organismHost>
<accession>P19822</accession>
<accession>Q38546</accession>
<accession>Q5DMI1</accession>
<accession>Q66LU3</accession>
<accession>Q6QGG5</accession>
<protein>
    <recommendedName>
        <fullName evidence="2">DNA polymerase</fullName>
        <ecNumber evidence="4">2.7.7.7</ecNumber>
        <ecNumber evidence="3">3.1.11.-</ecNumber>
    </recommendedName>
</protein>
<keyword id="KW-0903">Direct protein sequencing</keyword>
<keyword id="KW-0235">DNA replication</keyword>
<keyword id="KW-0238">DNA-binding</keyword>
<keyword id="KW-0239">DNA-directed DNA polymerase</keyword>
<keyword id="KW-0244">Early protein</keyword>
<keyword id="KW-0269">Exonuclease</keyword>
<keyword id="KW-0378">Hydrolase</keyword>
<keyword id="KW-0540">Nuclease</keyword>
<keyword id="KW-0548">Nucleotidyltransferase</keyword>
<keyword id="KW-1185">Reference proteome</keyword>
<keyword id="KW-0808">Transferase</keyword>
<keyword id="KW-1194">Viral DNA replication</keyword>
<comment type="function">
    <text evidence="3 4">Replicates the viral genomic DNA. This polymerase possesses two enzymatic activities: DNA synthesis (polymerase) and an exonucleolytic activity that degrades single-stranded DNA in the 3'-5' direction for proofreading purpose. The DNA synthesis very likely occurs by strand displacement.</text>
</comment>
<comment type="catalytic activity">
    <reaction evidence="4">
        <text>DNA(n) + a 2'-deoxyribonucleoside 5'-triphosphate = DNA(n+1) + diphosphate</text>
        <dbReference type="Rhea" id="RHEA:22508"/>
        <dbReference type="Rhea" id="RHEA-COMP:17339"/>
        <dbReference type="Rhea" id="RHEA-COMP:17340"/>
        <dbReference type="ChEBI" id="CHEBI:33019"/>
        <dbReference type="ChEBI" id="CHEBI:61560"/>
        <dbReference type="ChEBI" id="CHEBI:173112"/>
        <dbReference type="EC" id="2.7.7.7"/>
    </reaction>
</comment>
<comment type="subunit">
    <text>Single-chain monomer with multiple functions.</text>
</comment>
<comment type="induction">
    <text evidence="6">Expressed in the early phase of the viral replicative cycle.</text>
</comment>
<comment type="domain">
    <text evidence="3">The C-terminus seems to increase the affinity of the DNA for the polymerase active site, and thus increase processivity and decrease the accessibility of the DNA to the exonuclease active site.</text>
</comment>
<comment type="similarity">
    <text evidence="5">Belongs to the DNA polymerase type-A family.</text>
</comment>
<comment type="sequence caution" evidence="5">
    <conflict type="miscellaneous discrepancy">
        <sequence resource="EMBL-CDS" id="AAA32558"/>
    </conflict>
</comment>
<comment type="sequence caution" evidence="5">
    <conflict type="frameshift">
        <sequence resource="EMBL-CDS" id="AAA32561"/>
    </conflict>
</comment>
<comment type="sequence caution" evidence="5">
    <conflict type="miscellaneous discrepancy">
        <sequence resource="EMBL-CDS" id="AAX12050"/>
    </conflict>
</comment>
<sequence length="855" mass="97589">MKIAVVDKALNNTRYDKHFQLYGEEVDVFHMCNEKLSGRLLKKHITIGTPENPFDPNDYDFVILVGAEPFLYFAGKKGIGDYTGKRVEYNGYANWIASISPAQLHFKPEMKPVFDATVENIHDIINGREKIAKAGDYRPITDPDEAEEYIKMVYNMVIGPVAFDSETSALYCRDGYLLGVSISHQEYQGVYIDSDCLTEVAVYYLQKILDSENHTIVFHNLKFDMHFYKYHLGLTFDKAHKERRLHDTMLQHYVLDERRGTHGLKSLAMKYTDMGDYDFELDKFKDDYCKAHKIKKEDFTYDLIPFDIMWPYAAKDTDATIRLHNFFLPKIEKNEKLCSLYYDVLMPGCVFLQRVEDRGVPISIDRLKEAQYQLTHNLNKAREKLYTYPEVKQLEQDQNEAFNPNSVKQLRVLLFDYVGLTPTGKLTDTGADSTDAEALNELATQHPIAKTLLEIRKLTKLISTYVEKILLSIDADGCIRTGFHEHMTTSGRLSSSGKLNLQQLPRDESIIKGCVVAPPGYRVIAWDLTTAEVYYAAVLSGDRNMQQVFINMRNEPDKYPDFHSNIAHMVFKLQCEPRDVKKLFPALRQAAKAITFGILYGSGPAKVAHSVNEALLEQAAKTGEPFVECTVADAKEYIETYFGQFPQLKRWIDKCHDQIKNHGFIYSHFGRKRRLHNIHSEDRGVQGEEIRSGFNAIIQSASSDSLLLGAVDADNEIISLGLEQEMKIVMLVHDSVVAIVREDLIDQYNEILIRNIQKDRGISIPGCPIGIDSDSEAGGSRDYSCGKMKKQHPSIACIDDDEYTRYVKGVLLDAEFEYKKLAAMDKEHPDHSKYKDDKFIAVCKDLDNVKRILGA</sequence>
<dbReference type="EC" id="2.7.7.7" evidence="4"/>
<dbReference type="EC" id="3.1.11.-" evidence="3"/>
<dbReference type="EMBL" id="M24354">
    <property type="protein sequence ID" value="AAA32561.1"/>
    <property type="status" value="ALT_FRAME"/>
    <property type="molecule type" value="Genomic_DNA"/>
</dbReference>
<dbReference type="EMBL" id="AY543070">
    <property type="protein sequence ID" value="AAS77168.1"/>
    <property type="molecule type" value="Genomic_DNA"/>
</dbReference>
<dbReference type="EMBL" id="AY587007">
    <property type="protein sequence ID" value="AAX12050.1"/>
    <property type="status" value="ALT_INIT"/>
    <property type="molecule type" value="Genomic_DNA"/>
</dbReference>
<dbReference type="EMBL" id="AY692264">
    <property type="protein sequence ID" value="AAU05259.1"/>
    <property type="molecule type" value="Genomic_DNA"/>
</dbReference>
<dbReference type="EMBL" id="M64047">
    <property type="protein sequence ID" value="AAA32558.1"/>
    <property type="status" value="ALT_INIT"/>
    <property type="molecule type" value="Genomic_DNA"/>
</dbReference>
<dbReference type="PIR" id="A33923">
    <property type="entry name" value="DJBPT5"/>
</dbReference>
<dbReference type="SMR" id="P19822"/>
<dbReference type="KEGG" id="vg:2777603"/>
<dbReference type="Proteomes" id="UP000002107">
    <property type="component" value="Genome"/>
</dbReference>
<dbReference type="Proteomes" id="UP000002141">
    <property type="component" value="Segment"/>
</dbReference>
<dbReference type="Proteomes" id="UP000002503">
    <property type="component" value="Segment"/>
</dbReference>
<dbReference type="GO" id="GO:0008408">
    <property type="term" value="F:3'-5' exonuclease activity"/>
    <property type="evidence" value="ECO:0000314"/>
    <property type="project" value="UniProtKB"/>
</dbReference>
<dbReference type="GO" id="GO:0003677">
    <property type="term" value="F:DNA binding"/>
    <property type="evidence" value="ECO:0007669"/>
    <property type="project" value="UniProtKB-KW"/>
</dbReference>
<dbReference type="GO" id="GO:0003887">
    <property type="term" value="F:DNA-directed DNA polymerase activity"/>
    <property type="evidence" value="ECO:0000314"/>
    <property type="project" value="UniProtKB"/>
</dbReference>
<dbReference type="GO" id="GO:0006261">
    <property type="term" value="P:DNA-templated DNA replication"/>
    <property type="evidence" value="ECO:0007669"/>
    <property type="project" value="InterPro"/>
</dbReference>
<dbReference type="GO" id="GO:0006302">
    <property type="term" value="P:double-strand break repair"/>
    <property type="evidence" value="ECO:0007669"/>
    <property type="project" value="TreeGrafter"/>
</dbReference>
<dbReference type="GO" id="GO:0039693">
    <property type="term" value="P:viral DNA genome replication"/>
    <property type="evidence" value="ECO:0007669"/>
    <property type="project" value="UniProtKB-KW"/>
</dbReference>
<dbReference type="FunFam" id="1.10.150.20:FF:000085">
    <property type="entry name" value="DNA polymerase I"/>
    <property type="match status" value="1"/>
</dbReference>
<dbReference type="FunFam" id="3.30.420.10:FF:000121">
    <property type="entry name" value="DNA polymerase I"/>
    <property type="match status" value="1"/>
</dbReference>
<dbReference type="Gene3D" id="3.30.70.370">
    <property type="match status" value="1"/>
</dbReference>
<dbReference type="Gene3D" id="1.10.150.20">
    <property type="entry name" value="5' to 3' exonuclease, C-terminal subdomain"/>
    <property type="match status" value="1"/>
</dbReference>
<dbReference type="Gene3D" id="3.30.420.10">
    <property type="entry name" value="Ribonuclease H-like superfamily/Ribonuclease H"/>
    <property type="match status" value="1"/>
</dbReference>
<dbReference type="Gene3D" id="1.20.1060.10">
    <property type="entry name" value="Taq DNA Polymerase, Chain T, domain 4"/>
    <property type="match status" value="1"/>
</dbReference>
<dbReference type="InterPro" id="IPR002562">
    <property type="entry name" value="3'-5'_exonuclease_dom"/>
</dbReference>
<dbReference type="InterPro" id="IPR019760">
    <property type="entry name" value="DNA-dir_DNA_pol_A_CS"/>
</dbReference>
<dbReference type="InterPro" id="IPR001098">
    <property type="entry name" value="DNA-dir_DNA_pol_A_palm_dom"/>
</dbReference>
<dbReference type="InterPro" id="IPR043502">
    <property type="entry name" value="DNA/RNA_pol_sf"/>
</dbReference>
<dbReference type="InterPro" id="IPR002298">
    <property type="entry name" value="DNA_polymerase_A"/>
</dbReference>
<dbReference type="InterPro" id="IPR012337">
    <property type="entry name" value="RNaseH-like_sf"/>
</dbReference>
<dbReference type="InterPro" id="IPR036397">
    <property type="entry name" value="RNaseH_sf"/>
</dbReference>
<dbReference type="PANTHER" id="PTHR10133">
    <property type="entry name" value="DNA POLYMERASE I"/>
    <property type="match status" value="1"/>
</dbReference>
<dbReference type="PANTHER" id="PTHR10133:SF27">
    <property type="entry name" value="DNA POLYMERASE NU"/>
    <property type="match status" value="1"/>
</dbReference>
<dbReference type="Pfam" id="PF00476">
    <property type="entry name" value="DNA_pol_A"/>
    <property type="match status" value="1"/>
</dbReference>
<dbReference type="Pfam" id="PF01612">
    <property type="entry name" value="DNA_pol_A_exo1"/>
    <property type="match status" value="1"/>
</dbReference>
<dbReference type="PRINTS" id="PR00868">
    <property type="entry name" value="DNAPOLI"/>
</dbReference>
<dbReference type="SMART" id="SM00474">
    <property type="entry name" value="35EXOc"/>
    <property type="match status" value="1"/>
</dbReference>
<dbReference type="SMART" id="SM00482">
    <property type="entry name" value="POLAc"/>
    <property type="match status" value="1"/>
</dbReference>
<dbReference type="SUPFAM" id="SSF56672">
    <property type="entry name" value="DNA/RNA polymerases"/>
    <property type="match status" value="1"/>
</dbReference>
<dbReference type="SUPFAM" id="SSF53098">
    <property type="entry name" value="Ribonuclease H-like"/>
    <property type="match status" value="1"/>
</dbReference>
<dbReference type="PROSITE" id="PS00447">
    <property type="entry name" value="DNA_POLYMERASE_A"/>
    <property type="match status" value="1"/>
</dbReference>
<proteinExistence type="evidence at protein level"/>
<reference key="1">
    <citation type="journal article" date="1989" name="Proc. Natl. Acad. Sci. U.S.A.">
        <title>T5 DNA polymerase: structural -- functional relationships to other DNA polymerases.</title>
        <authorList>
            <person name="Leavitt M.C."/>
            <person name="Ito J."/>
        </authorList>
    </citation>
    <scope>NUCLEOTIDE SEQUENCE [GENOMIC DNA]</scope>
</reference>
<reference key="2">
    <citation type="submission" date="2004-01" db="EMBL/GenBank/DDBJ databases">
        <title>Bacteriophage T5 complete genome.</title>
        <authorList>
            <person name="Ksenzenko V.N."/>
            <person name="Kaliman A.V."/>
            <person name="Krutilina A.I."/>
            <person name="Shlyapnikov M.G."/>
        </authorList>
    </citation>
    <scope>NUCLEOTIDE SEQUENCE [LARGE SCALE GENOMIC DNA]</scope>
    <scope>INDUCTION</scope>
</reference>
<reference key="3">
    <citation type="journal article" date="2005" name="Virology">
        <title>Complete genome sequence of bacteriophage T5.</title>
        <authorList>
            <person name="Wang J."/>
            <person name="Jiang Y."/>
            <person name="Vincent M."/>
            <person name="Sun Y."/>
            <person name="Yu H."/>
            <person name="Wang J."/>
            <person name="Bao Q."/>
            <person name="Kong H."/>
            <person name="Hu S."/>
        </authorList>
    </citation>
    <scope>NUCLEOTIDE SEQUENCE [LARGE SCALE GENOMIC DNA]</scope>
    <source>
        <strain>ATCC 11303-B5</strain>
    </source>
</reference>
<reference key="4">
    <citation type="journal article" date="2014" name="J. Virol.">
        <title>Insights into bacteriophage T5 structure from analysis of its morphogenesis genes and protein components.</title>
        <authorList>
            <person name="Zivanovic Y."/>
            <person name="Confalonieri F."/>
            <person name="Ponchon L."/>
            <person name="Lurz R."/>
            <person name="Chami M."/>
            <person name="Flayhan A."/>
            <person name="Renouard M."/>
            <person name="Huet A."/>
            <person name="Decottignies P."/>
            <person name="Davidson A.R."/>
            <person name="Breyton C."/>
            <person name="Boulanger P."/>
        </authorList>
    </citation>
    <scope>NUCLEOTIDE SEQUENCE [LARGE SCALE GENOMIC DNA]</scope>
    <source>
        <strain>St0 deletion mutant</strain>
    </source>
</reference>
<reference key="5">
    <citation type="journal article" date="1991" name="Gene">
        <title>Cloning and overexpression of the gene encoding bacteriophage T5 DNA polymerase.</title>
        <authorList>
            <person name="Chatterjee D.K."/>
            <person name="Fujimura R.K."/>
            <person name="Campbell J.H."/>
            <person name="Gerard G.F."/>
        </authorList>
    </citation>
    <scope>NUCLEOTIDE SEQUENCE [GENOMIC DNA] OF 1-163</scope>
</reference>
<reference key="6">
    <citation type="journal article" date="2004" name="J. Biol. Chem.">
        <title>The highly processive DNA polymerase of bacteriophage T5. Role of the unique N and C termini.</title>
        <authorList>
            <person name="Andraos N."/>
            <person name="Tabor S."/>
            <person name="Richardson C.C."/>
        </authorList>
    </citation>
    <scope>PROTEIN SEQUENCE OF 1-10</scope>
    <scope>FUNCTION</scope>
    <scope>DOMAIN</scope>
    <scope>CATALYTIC ACTIVITY</scope>
</reference>
<reference key="7">
    <citation type="journal article" date="1976" name="J. Biol. Chem.">
        <title>Characterization of DNA polymerase induced by bacteriophage T5 with DNA containing single strand breaks.</title>
        <authorList>
            <person name="Fujimura R.K."/>
            <person name="Roop B.C."/>
        </authorList>
    </citation>
    <scope>CATALYTIC ACTIVITY</scope>
    <scope>FUNCTION</scope>
</reference>